<comment type="function">
    <text evidence="4 6">A cytochrome P450 monooxygenase involved in neural cholesterol clearance through bile acid synthesis (PubMed:10748047, PubMed:25201972). Catalyzes 7-alpha hydroxylation of (24S)-hydroxycholesterol, a neural oxysterol that is metabolized to bile acids in the liver (PubMed:10748047, PubMed:25201972). Mechanistically, uses molecular oxygen inserting one oxygen atom into a substrate, and reducing the second into a water molecule, with two electrons provided by NADPH via cytochrome P450 reductase (CPR; NADPH-ferrihemoprotein reductase) (PubMed:10748047, PubMed:25201972).</text>
</comment>
<comment type="catalytic activity">
    <reaction evidence="6">
        <text>(24S)-hydroxycholesterol + reduced [NADPH--hemoprotein reductase] + O2 = (24S)-7alpha-dihydroxycholesterol + oxidized [NADPH--hemoprotein reductase] + H2O + H(+)</text>
        <dbReference type="Rhea" id="RHEA:46124"/>
        <dbReference type="Rhea" id="RHEA-COMP:11964"/>
        <dbReference type="Rhea" id="RHEA-COMP:11965"/>
        <dbReference type="ChEBI" id="CHEBI:15377"/>
        <dbReference type="ChEBI" id="CHEBI:15378"/>
        <dbReference type="ChEBI" id="CHEBI:15379"/>
        <dbReference type="ChEBI" id="CHEBI:34310"/>
        <dbReference type="ChEBI" id="CHEBI:37640"/>
        <dbReference type="ChEBI" id="CHEBI:57618"/>
        <dbReference type="ChEBI" id="CHEBI:58210"/>
        <dbReference type="EC" id="1.14.14.26"/>
    </reaction>
    <physiologicalReaction direction="left-to-right" evidence="10">
        <dbReference type="Rhea" id="RHEA:46125"/>
    </physiologicalReaction>
</comment>
<comment type="cofactor">
    <cofactor evidence="1">
        <name>heme</name>
        <dbReference type="ChEBI" id="CHEBI:30413"/>
    </cofactor>
</comment>
<comment type="pathway">
    <text evidence="10">Steroid metabolism; cholesterol degradation.</text>
</comment>
<comment type="pathway">
    <text evidence="10">Lipid metabolism; bile acid biosynthesis.</text>
</comment>
<comment type="interaction">
    <interactant intactId="EBI-3918342">
        <id>Q9NYL5</id>
    </interactant>
    <interactant intactId="EBI-3906578">
        <id>Q15034</id>
        <label>HERC3</label>
    </interactant>
    <organismsDiffer>false</organismsDiffer>
    <experiments>3</experiments>
</comment>
<comment type="subcellular location">
    <subcellularLocation>
        <location evidence="2">Endoplasmic reticulum membrane</location>
        <topology evidence="3">Multi-pass membrane protein</topology>
    </subcellularLocation>
    <subcellularLocation>
        <location evidence="2">Microsome membrane</location>
        <topology evidence="3">Multi-pass membrane protein</topology>
    </subcellularLocation>
</comment>
<comment type="tissue specificity">
    <text evidence="4">Liver specific.</text>
</comment>
<comment type="polymorphism">
    <text evidence="6">Variations in CYP39A1 are associated with elevated serum (24S)-hydroxycholesterol levels among a cohort of American residents.</text>
</comment>
<comment type="similarity">
    <text evidence="9">Belongs to the cytochrome P450 family.</text>
</comment>
<name>CP39A_HUMAN</name>
<dbReference type="EC" id="1.14.14.26" evidence="10"/>
<dbReference type="EMBL" id="AF237982">
    <property type="protein sequence ID" value="AAF63329.1"/>
    <property type="molecule type" value="mRNA"/>
</dbReference>
<dbReference type="EMBL" id="AK292263">
    <property type="protein sequence ID" value="BAF84952.1"/>
    <property type="molecule type" value="mRNA"/>
</dbReference>
<dbReference type="EMBL" id="AL591242">
    <property type="status" value="NOT_ANNOTATED_CDS"/>
    <property type="molecule type" value="Genomic_DNA"/>
</dbReference>
<dbReference type="EMBL" id="AL035670">
    <property type="status" value="NOT_ANNOTATED_CDS"/>
    <property type="molecule type" value="Genomic_DNA"/>
</dbReference>
<dbReference type="EMBL" id="BC010358">
    <property type="protein sequence ID" value="AAH10358.1"/>
    <property type="molecule type" value="mRNA"/>
</dbReference>
<dbReference type="CCDS" id="CCDS4916.1"/>
<dbReference type="RefSeq" id="NP_001265667.1">
    <property type="nucleotide sequence ID" value="NM_001278738.1"/>
</dbReference>
<dbReference type="RefSeq" id="NP_001265668.1">
    <property type="nucleotide sequence ID" value="NM_001278739.1"/>
</dbReference>
<dbReference type="RefSeq" id="NP_057677.2">
    <property type="nucleotide sequence ID" value="NM_016593.4"/>
</dbReference>
<dbReference type="SMR" id="Q9NYL5"/>
<dbReference type="BioGRID" id="119453">
    <property type="interactions" value="7"/>
</dbReference>
<dbReference type="FunCoup" id="Q9NYL5">
    <property type="interactions" value="386"/>
</dbReference>
<dbReference type="IntAct" id="Q9NYL5">
    <property type="interactions" value="5"/>
</dbReference>
<dbReference type="STRING" id="9606.ENSP00000275016"/>
<dbReference type="SwissLipids" id="SLP:000001229"/>
<dbReference type="iPTMnet" id="Q9NYL5"/>
<dbReference type="PhosphoSitePlus" id="Q9NYL5"/>
<dbReference type="BioMuta" id="CYP39A1"/>
<dbReference type="DMDM" id="145559458"/>
<dbReference type="MassIVE" id="Q9NYL5"/>
<dbReference type="PaxDb" id="9606-ENSP00000275016"/>
<dbReference type="PeptideAtlas" id="Q9NYL5"/>
<dbReference type="ProteomicsDB" id="83251"/>
<dbReference type="Antibodypedia" id="30714">
    <property type="antibodies" value="242 antibodies from 28 providers"/>
</dbReference>
<dbReference type="DNASU" id="51302"/>
<dbReference type="Ensembl" id="ENST00000275016.3">
    <property type="protein sequence ID" value="ENSP00000275016.2"/>
    <property type="gene ID" value="ENSG00000146233.8"/>
</dbReference>
<dbReference type="GeneID" id="51302"/>
<dbReference type="KEGG" id="hsa:51302"/>
<dbReference type="MANE-Select" id="ENST00000275016.3">
    <property type="protein sequence ID" value="ENSP00000275016.2"/>
    <property type="RefSeq nucleotide sequence ID" value="NM_016593.5"/>
    <property type="RefSeq protein sequence ID" value="NP_057677.2"/>
</dbReference>
<dbReference type="UCSC" id="uc003oyf.3">
    <property type="organism name" value="human"/>
</dbReference>
<dbReference type="AGR" id="HGNC:17449"/>
<dbReference type="CTD" id="51302"/>
<dbReference type="DisGeNET" id="51302"/>
<dbReference type="GeneCards" id="CYP39A1"/>
<dbReference type="HGNC" id="HGNC:17449">
    <property type="gene designation" value="CYP39A1"/>
</dbReference>
<dbReference type="HPA" id="ENSG00000146233">
    <property type="expression patterns" value="Tissue enriched (liver)"/>
</dbReference>
<dbReference type="MIM" id="605994">
    <property type="type" value="gene"/>
</dbReference>
<dbReference type="neXtProt" id="NX_Q9NYL5"/>
<dbReference type="OpenTargets" id="ENSG00000146233"/>
<dbReference type="PharmGKB" id="PA38452"/>
<dbReference type="VEuPathDB" id="HostDB:ENSG00000146233"/>
<dbReference type="eggNOG" id="KOG0684">
    <property type="taxonomic scope" value="Eukaryota"/>
</dbReference>
<dbReference type="GeneTree" id="ENSGT00940000153141"/>
<dbReference type="HOGENOM" id="CLU_558065_0_0_1"/>
<dbReference type="InParanoid" id="Q9NYL5"/>
<dbReference type="OMA" id="EYLLRNW"/>
<dbReference type="OrthoDB" id="6692864at2759"/>
<dbReference type="PAN-GO" id="Q9NYL5">
    <property type="GO annotations" value="4 GO annotations based on evolutionary models"/>
</dbReference>
<dbReference type="PhylomeDB" id="Q9NYL5"/>
<dbReference type="TreeFam" id="TF105090"/>
<dbReference type="BioCyc" id="MetaCyc:HS07335-MONOMER"/>
<dbReference type="PathwayCommons" id="Q9NYL5"/>
<dbReference type="Reactome" id="R-HSA-193775">
    <property type="pathway name" value="Synthesis of bile acids and bile salts via 24-hydroxycholesterol"/>
</dbReference>
<dbReference type="Reactome" id="R-HSA-211976">
    <property type="pathway name" value="Endogenous sterols"/>
</dbReference>
<dbReference type="SignaLink" id="Q9NYL5"/>
<dbReference type="UniPathway" id="UPA00221"/>
<dbReference type="UniPathway" id="UPA01058"/>
<dbReference type="BioGRID-ORCS" id="51302">
    <property type="hits" value="17 hits in 1153 CRISPR screens"/>
</dbReference>
<dbReference type="GeneWiki" id="CYP39A1"/>
<dbReference type="GenomeRNAi" id="51302"/>
<dbReference type="Pharos" id="Q9NYL5">
    <property type="development level" value="Tbio"/>
</dbReference>
<dbReference type="PRO" id="PR:Q9NYL5"/>
<dbReference type="Proteomes" id="UP000005640">
    <property type="component" value="Chromosome 6"/>
</dbReference>
<dbReference type="RNAct" id="Q9NYL5">
    <property type="molecule type" value="protein"/>
</dbReference>
<dbReference type="Bgee" id="ENSG00000146233">
    <property type="expression patterns" value="Expressed in parotid gland and 144 other cell types or tissues"/>
</dbReference>
<dbReference type="ExpressionAtlas" id="Q9NYL5">
    <property type="expression patterns" value="baseline and differential"/>
</dbReference>
<dbReference type="GO" id="GO:0005789">
    <property type="term" value="C:endoplasmic reticulum membrane"/>
    <property type="evidence" value="ECO:0000304"/>
    <property type="project" value="Reactome"/>
</dbReference>
<dbReference type="GO" id="GO:0043231">
    <property type="term" value="C:intracellular membrane-bounded organelle"/>
    <property type="evidence" value="ECO:0000304"/>
    <property type="project" value="UniProtKB"/>
</dbReference>
<dbReference type="GO" id="GO:0033782">
    <property type="term" value="F:24S-hydroxycholesterol 7-alpha-hydroxylase activity"/>
    <property type="evidence" value="ECO:0007669"/>
    <property type="project" value="UniProtKB-EC"/>
</dbReference>
<dbReference type="GO" id="GO:0020037">
    <property type="term" value="F:heme binding"/>
    <property type="evidence" value="ECO:0007669"/>
    <property type="project" value="InterPro"/>
</dbReference>
<dbReference type="GO" id="GO:0005506">
    <property type="term" value="F:iron ion binding"/>
    <property type="evidence" value="ECO:0007669"/>
    <property type="project" value="InterPro"/>
</dbReference>
<dbReference type="GO" id="GO:0008396">
    <property type="term" value="F:oxysterol 7-alpha-hydroxylase activity"/>
    <property type="evidence" value="ECO:0000318"/>
    <property type="project" value="GO_Central"/>
</dbReference>
<dbReference type="GO" id="GO:0006699">
    <property type="term" value="P:bile acid biosynthetic process"/>
    <property type="evidence" value="ECO:0000314"/>
    <property type="project" value="UniProtKB"/>
</dbReference>
<dbReference type="GO" id="GO:0006707">
    <property type="term" value="P:cholesterol catabolic process"/>
    <property type="evidence" value="ECO:0007669"/>
    <property type="project" value="UniProtKB-UniPathway"/>
</dbReference>
<dbReference type="GO" id="GO:0042632">
    <property type="term" value="P:cholesterol homeostasis"/>
    <property type="evidence" value="ECO:0000318"/>
    <property type="project" value="GO_Central"/>
</dbReference>
<dbReference type="GO" id="GO:0007586">
    <property type="term" value="P:digestion"/>
    <property type="evidence" value="ECO:0000304"/>
    <property type="project" value="UniProtKB"/>
</dbReference>
<dbReference type="GO" id="GO:0016125">
    <property type="term" value="P:sterol metabolic process"/>
    <property type="evidence" value="ECO:0000304"/>
    <property type="project" value="Reactome"/>
</dbReference>
<dbReference type="CDD" id="cd20635">
    <property type="entry name" value="CYP39A1"/>
    <property type="match status" value="1"/>
</dbReference>
<dbReference type="FunFam" id="1.10.630.10:FF:000060">
    <property type="entry name" value="Cytochrome P450 family 39 subfamily A member 1"/>
    <property type="match status" value="1"/>
</dbReference>
<dbReference type="Gene3D" id="1.10.630.10">
    <property type="entry name" value="Cytochrome P450"/>
    <property type="match status" value="1"/>
</dbReference>
<dbReference type="InterPro" id="IPR050529">
    <property type="entry name" value="CYP450_sterol_14alpha_dmase"/>
</dbReference>
<dbReference type="InterPro" id="IPR001128">
    <property type="entry name" value="Cyt_P450"/>
</dbReference>
<dbReference type="InterPro" id="IPR024204">
    <property type="entry name" value="Cyt_P450_CYP7A1-type"/>
</dbReference>
<dbReference type="InterPro" id="IPR002403">
    <property type="entry name" value="Cyt_P450_E_grp-IV"/>
</dbReference>
<dbReference type="InterPro" id="IPR036396">
    <property type="entry name" value="Cyt_P450_sf"/>
</dbReference>
<dbReference type="PANTHER" id="PTHR24304:SF2">
    <property type="entry name" value="24-HYDROXYCHOLESTEROL 7-ALPHA-HYDROXYLASE"/>
    <property type="match status" value="1"/>
</dbReference>
<dbReference type="PANTHER" id="PTHR24304">
    <property type="entry name" value="CYTOCHROME P450 FAMILY 7"/>
    <property type="match status" value="1"/>
</dbReference>
<dbReference type="Pfam" id="PF00067">
    <property type="entry name" value="p450"/>
    <property type="match status" value="1"/>
</dbReference>
<dbReference type="PIRSF" id="PIRSF000047">
    <property type="entry name" value="Cytochrome_CYPVIIA1"/>
    <property type="match status" value="1"/>
</dbReference>
<dbReference type="PRINTS" id="PR00465">
    <property type="entry name" value="EP450IV"/>
</dbReference>
<dbReference type="SUPFAM" id="SSF48264">
    <property type="entry name" value="Cytochrome P450"/>
    <property type="match status" value="1"/>
</dbReference>
<accession>Q9NYL5</accession>
<accession>Q5VTT0</accession>
<accession>Q96FW5</accession>
<gene>
    <name evidence="8 11" type="primary">CYP39A1</name>
</gene>
<proteinExistence type="evidence at protein level"/>
<keyword id="KW-0153">Cholesterol metabolism</keyword>
<keyword id="KW-0256">Endoplasmic reticulum</keyword>
<keyword id="KW-0349">Heme</keyword>
<keyword id="KW-0408">Iron</keyword>
<keyword id="KW-0443">Lipid metabolism</keyword>
<keyword id="KW-0472">Membrane</keyword>
<keyword id="KW-0479">Metal-binding</keyword>
<keyword id="KW-0492">Microsome</keyword>
<keyword id="KW-0503">Monooxygenase</keyword>
<keyword id="KW-0560">Oxidoreductase</keyword>
<keyword id="KW-1267">Proteomics identification</keyword>
<keyword id="KW-1185">Reference proteome</keyword>
<keyword id="KW-0732">Signal</keyword>
<keyword id="KW-0753">Steroid metabolism</keyword>
<keyword id="KW-1207">Sterol metabolism</keyword>
<keyword id="KW-0812">Transmembrane</keyword>
<keyword id="KW-1133">Transmembrane helix</keyword>
<organism>
    <name type="scientific">Homo sapiens</name>
    <name type="common">Human</name>
    <dbReference type="NCBI Taxonomy" id="9606"/>
    <lineage>
        <taxon>Eukaryota</taxon>
        <taxon>Metazoa</taxon>
        <taxon>Chordata</taxon>
        <taxon>Craniata</taxon>
        <taxon>Vertebrata</taxon>
        <taxon>Euteleostomi</taxon>
        <taxon>Mammalia</taxon>
        <taxon>Eutheria</taxon>
        <taxon>Euarchontoglires</taxon>
        <taxon>Primates</taxon>
        <taxon>Haplorrhini</taxon>
        <taxon>Catarrhini</taxon>
        <taxon>Hominidae</taxon>
        <taxon>Homo</taxon>
    </lineage>
</organism>
<feature type="signal peptide" evidence="3">
    <location>
        <begin position="1"/>
        <end position="23"/>
    </location>
</feature>
<feature type="chain" id="PRO_0000051992" description="24-hydroxycholesterol 7-alpha-hydroxylase" evidence="3">
    <location>
        <begin position="24"/>
        <end position="469"/>
    </location>
</feature>
<feature type="transmembrane region" description="Helical" evidence="3">
    <location>
        <begin position="267"/>
        <end position="287"/>
    </location>
</feature>
<feature type="transmembrane region" description="Helical" evidence="3">
    <location>
        <begin position="352"/>
        <end position="372"/>
    </location>
</feature>
<feature type="transmembrane region" description="Helical" evidence="3">
    <location>
        <begin position="412"/>
        <end position="432"/>
    </location>
</feature>
<feature type="binding site" description="axial binding residue" evidence="1">
    <location>
        <position position="414"/>
    </location>
    <ligand>
        <name>heme</name>
        <dbReference type="ChEBI" id="CHEBI:30413"/>
    </ligand>
    <ligandPart>
        <name>Fe</name>
        <dbReference type="ChEBI" id="CHEBI:18248"/>
    </ligandPart>
</feature>
<feature type="sequence variant" id="VAR_031609" description="60% decrease of 7-alpha hydroxylase activity; dbSNP:rs12192544." evidence="5 6">
    <original>R</original>
    <variation>P</variation>
    <location>
        <position position="23"/>
    </location>
</feature>
<feature type="sequence variant" id="VAR_031610" description="Correlated with elevated serum (24S)-hydroxycholesterol levels; 30% decrease of 7-alpha hydroxylase activity; dbSNP:rs2277119." evidence="6">
    <original>R</original>
    <variation>H</variation>
    <location>
        <position position="103"/>
    </location>
</feature>
<feature type="sequence variant" id="VAR_031611" description="10% decrease of 7-alpha hydroxylase activity; dbSNP:rs17856332." evidence="5 6">
    <original>Y</original>
    <variation>H</variation>
    <location>
        <position position="288"/>
    </location>
</feature>
<feature type="sequence variant" id="VAR_031612" description="Correlated with elevated serum (24S)-hydroxycholesterol levels; impairs 7-alpha hydroxylase activity; dbSNP:rs7761731." evidence="4 6">
    <original>N</original>
    <variation>K</variation>
    <location>
        <position position="324"/>
    </location>
</feature>
<feature type="sequence variant" id="VAR_083092" description="Impairs 7-alpha hydroxylase activity; dbSNP:rs41273654." evidence="6">
    <original>K</original>
    <variation>Q</variation>
    <location>
        <position position="329"/>
    </location>
</feature>
<reference key="1">
    <citation type="journal article" date="2000" name="J. Biol. Chem.">
        <title>Expression cloning of an oxysterol 7alpha-hydroxylase selective for 24-hydroxycholesterol.</title>
        <authorList>
            <person name="Li-Hawkins J."/>
            <person name="Lund E.G."/>
            <person name="Bronson A.D."/>
            <person name="Russell D.W."/>
        </authorList>
    </citation>
    <scope>NUCLEOTIDE SEQUENCE [MRNA]</scope>
    <scope>FUNCTION</scope>
    <scope>VARIANT LYS-324</scope>
    <source>
        <tissue>Liver</tissue>
    </source>
</reference>
<reference key="2">
    <citation type="journal article" date="2004" name="Nat. Genet.">
        <title>Complete sequencing and characterization of 21,243 full-length human cDNAs.</title>
        <authorList>
            <person name="Ota T."/>
            <person name="Suzuki Y."/>
            <person name="Nishikawa T."/>
            <person name="Otsuki T."/>
            <person name="Sugiyama T."/>
            <person name="Irie R."/>
            <person name="Wakamatsu A."/>
            <person name="Hayashi K."/>
            <person name="Sato H."/>
            <person name="Nagai K."/>
            <person name="Kimura K."/>
            <person name="Makita H."/>
            <person name="Sekine M."/>
            <person name="Obayashi M."/>
            <person name="Nishi T."/>
            <person name="Shibahara T."/>
            <person name="Tanaka T."/>
            <person name="Ishii S."/>
            <person name="Yamamoto J."/>
            <person name="Saito K."/>
            <person name="Kawai Y."/>
            <person name="Isono Y."/>
            <person name="Nakamura Y."/>
            <person name="Nagahari K."/>
            <person name="Murakami K."/>
            <person name="Yasuda T."/>
            <person name="Iwayanagi T."/>
            <person name="Wagatsuma M."/>
            <person name="Shiratori A."/>
            <person name="Sudo H."/>
            <person name="Hosoiri T."/>
            <person name="Kaku Y."/>
            <person name="Kodaira H."/>
            <person name="Kondo H."/>
            <person name="Sugawara M."/>
            <person name="Takahashi M."/>
            <person name="Kanda K."/>
            <person name="Yokoi T."/>
            <person name="Furuya T."/>
            <person name="Kikkawa E."/>
            <person name="Omura Y."/>
            <person name="Abe K."/>
            <person name="Kamihara K."/>
            <person name="Katsuta N."/>
            <person name="Sato K."/>
            <person name="Tanikawa M."/>
            <person name="Yamazaki M."/>
            <person name="Ninomiya K."/>
            <person name="Ishibashi T."/>
            <person name="Yamashita H."/>
            <person name="Murakawa K."/>
            <person name="Fujimori K."/>
            <person name="Tanai H."/>
            <person name="Kimata M."/>
            <person name="Watanabe M."/>
            <person name="Hiraoka S."/>
            <person name="Chiba Y."/>
            <person name="Ishida S."/>
            <person name="Ono Y."/>
            <person name="Takiguchi S."/>
            <person name="Watanabe S."/>
            <person name="Yosida M."/>
            <person name="Hotuta T."/>
            <person name="Kusano J."/>
            <person name="Kanehori K."/>
            <person name="Takahashi-Fujii A."/>
            <person name="Hara H."/>
            <person name="Tanase T.-O."/>
            <person name="Nomura Y."/>
            <person name="Togiya S."/>
            <person name="Komai F."/>
            <person name="Hara R."/>
            <person name="Takeuchi K."/>
            <person name="Arita M."/>
            <person name="Imose N."/>
            <person name="Musashino K."/>
            <person name="Yuuki H."/>
            <person name="Oshima A."/>
            <person name="Sasaki N."/>
            <person name="Aotsuka S."/>
            <person name="Yoshikawa Y."/>
            <person name="Matsunawa H."/>
            <person name="Ichihara T."/>
            <person name="Shiohata N."/>
            <person name="Sano S."/>
            <person name="Moriya S."/>
            <person name="Momiyama H."/>
            <person name="Satoh N."/>
            <person name="Takami S."/>
            <person name="Terashima Y."/>
            <person name="Suzuki O."/>
            <person name="Nakagawa S."/>
            <person name="Senoh A."/>
            <person name="Mizoguchi H."/>
            <person name="Goto Y."/>
            <person name="Shimizu F."/>
            <person name="Wakebe H."/>
            <person name="Hishigaki H."/>
            <person name="Watanabe T."/>
            <person name="Sugiyama A."/>
            <person name="Takemoto M."/>
            <person name="Kawakami B."/>
            <person name="Yamazaki M."/>
            <person name="Watanabe K."/>
            <person name="Kumagai A."/>
            <person name="Itakura S."/>
            <person name="Fukuzumi Y."/>
            <person name="Fujimori Y."/>
            <person name="Komiyama M."/>
            <person name="Tashiro H."/>
            <person name="Tanigami A."/>
            <person name="Fujiwara T."/>
            <person name="Ono T."/>
            <person name="Yamada K."/>
            <person name="Fujii Y."/>
            <person name="Ozaki K."/>
            <person name="Hirao M."/>
            <person name="Ohmori Y."/>
            <person name="Kawabata A."/>
            <person name="Hikiji T."/>
            <person name="Kobatake N."/>
            <person name="Inagaki H."/>
            <person name="Ikema Y."/>
            <person name="Okamoto S."/>
            <person name="Okitani R."/>
            <person name="Kawakami T."/>
            <person name="Noguchi S."/>
            <person name="Itoh T."/>
            <person name="Shigeta K."/>
            <person name="Senba T."/>
            <person name="Matsumura K."/>
            <person name="Nakajima Y."/>
            <person name="Mizuno T."/>
            <person name="Morinaga M."/>
            <person name="Sasaki M."/>
            <person name="Togashi T."/>
            <person name="Oyama M."/>
            <person name="Hata H."/>
            <person name="Watanabe M."/>
            <person name="Komatsu T."/>
            <person name="Mizushima-Sugano J."/>
            <person name="Satoh T."/>
            <person name="Shirai Y."/>
            <person name="Takahashi Y."/>
            <person name="Nakagawa K."/>
            <person name="Okumura K."/>
            <person name="Nagase T."/>
            <person name="Nomura N."/>
            <person name="Kikuchi H."/>
            <person name="Masuho Y."/>
            <person name="Yamashita R."/>
            <person name="Nakai K."/>
            <person name="Yada T."/>
            <person name="Nakamura Y."/>
            <person name="Ohara O."/>
            <person name="Isogai T."/>
            <person name="Sugano S."/>
        </authorList>
    </citation>
    <scope>NUCLEOTIDE SEQUENCE [LARGE SCALE MRNA]</scope>
    <source>
        <tissue>Testis</tissue>
    </source>
</reference>
<reference key="3">
    <citation type="journal article" date="2003" name="Nature">
        <title>The DNA sequence and analysis of human chromosome 6.</title>
        <authorList>
            <person name="Mungall A.J."/>
            <person name="Palmer S.A."/>
            <person name="Sims S.K."/>
            <person name="Edwards C.A."/>
            <person name="Ashurst J.L."/>
            <person name="Wilming L."/>
            <person name="Jones M.C."/>
            <person name="Horton R."/>
            <person name="Hunt S.E."/>
            <person name="Scott C.E."/>
            <person name="Gilbert J.G.R."/>
            <person name="Clamp M.E."/>
            <person name="Bethel G."/>
            <person name="Milne S."/>
            <person name="Ainscough R."/>
            <person name="Almeida J.P."/>
            <person name="Ambrose K.D."/>
            <person name="Andrews T.D."/>
            <person name="Ashwell R.I.S."/>
            <person name="Babbage A.K."/>
            <person name="Bagguley C.L."/>
            <person name="Bailey J."/>
            <person name="Banerjee R."/>
            <person name="Barker D.J."/>
            <person name="Barlow K.F."/>
            <person name="Bates K."/>
            <person name="Beare D.M."/>
            <person name="Beasley H."/>
            <person name="Beasley O."/>
            <person name="Bird C.P."/>
            <person name="Blakey S.E."/>
            <person name="Bray-Allen S."/>
            <person name="Brook J."/>
            <person name="Brown A.J."/>
            <person name="Brown J.Y."/>
            <person name="Burford D.C."/>
            <person name="Burrill W."/>
            <person name="Burton J."/>
            <person name="Carder C."/>
            <person name="Carter N.P."/>
            <person name="Chapman J.C."/>
            <person name="Clark S.Y."/>
            <person name="Clark G."/>
            <person name="Clee C.M."/>
            <person name="Clegg S."/>
            <person name="Cobley V."/>
            <person name="Collier R.E."/>
            <person name="Collins J.E."/>
            <person name="Colman L.K."/>
            <person name="Corby N.R."/>
            <person name="Coville G.J."/>
            <person name="Culley K.M."/>
            <person name="Dhami P."/>
            <person name="Davies J."/>
            <person name="Dunn M."/>
            <person name="Earthrowl M.E."/>
            <person name="Ellington A.E."/>
            <person name="Evans K.A."/>
            <person name="Faulkner L."/>
            <person name="Francis M.D."/>
            <person name="Frankish A."/>
            <person name="Frankland J."/>
            <person name="French L."/>
            <person name="Garner P."/>
            <person name="Garnett J."/>
            <person name="Ghori M.J."/>
            <person name="Gilby L.M."/>
            <person name="Gillson C.J."/>
            <person name="Glithero R.J."/>
            <person name="Grafham D.V."/>
            <person name="Grant M."/>
            <person name="Gribble S."/>
            <person name="Griffiths C."/>
            <person name="Griffiths M.N.D."/>
            <person name="Hall R."/>
            <person name="Halls K.S."/>
            <person name="Hammond S."/>
            <person name="Harley J.L."/>
            <person name="Hart E.A."/>
            <person name="Heath P.D."/>
            <person name="Heathcott R."/>
            <person name="Holmes S.J."/>
            <person name="Howden P.J."/>
            <person name="Howe K.L."/>
            <person name="Howell G.R."/>
            <person name="Huckle E."/>
            <person name="Humphray S.J."/>
            <person name="Humphries M.D."/>
            <person name="Hunt A.R."/>
            <person name="Johnson C.M."/>
            <person name="Joy A.A."/>
            <person name="Kay M."/>
            <person name="Keenan S.J."/>
            <person name="Kimberley A.M."/>
            <person name="King A."/>
            <person name="Laird G.K."/>
            <person name="Langford C."/>
            <person name="Lawlor S."/>
            <person name="Leongamornlert D.A."/>
            <person name="Leversha M."/>
            <person name="Lloyd C.R."/>
            <person name="Lloyd D.M."/>
            <person name="Loveland J.E."/>
            <person name="Lovell J."/>
            <person name="Martin S."/>
            <person name="Mashreghi-Mohammadi M."/>
            <person name="Maslen G.L."/>
            <person name="Matthews L."/>
            <person name="McCann O.T."/>
            <person name="McLaren S.J."/>
            <person name="McLay K."/>
            <person name="McMurray A."/>
            <person name="Moore M.J.F."/>
            <person name="Mullikin J.C."/>
            <person name="Niblett D."/>
            <person name="Nickerson T."/>
            <person name="Novik K.L."/>
            <person name="Oliver K."/>
            <person name="Overton-Larty E.K."/>
            <person name="Parker A."/>
            <person name="Patel R."/>
            <person name="Pearce A.V."/>
            <person name="Peck A.I."/>
            <person name="Phillimore B.J.C.T."/>
            <person name="Phillips S."/>
            <person name="Plumb R.W."/>
            <person name="Porter K.M."/>
            <person name="Ramsey Y."/>
            <person name="Ranby S.A."/>
            <person name="Rice C.M."/>
            <person name="Ross M.T."/>
            <person name="Searle S.M."/>
            <person name="Sehra H.K."/>
            <person name="Sheridan E."/>
            <person name="Skuce C.D."/>
            <person name="Smith S."/>
            <person name="Smith M."/>
            <person name="Spraggon L."/>
            <person name="Squares S.L."/>
            <person name="Steward C.A."/>
            <person name="Sycamore N."/>
            <person name="Tamlyn-Hall G."/>
            <person name="Tester J."/>
            <person name="Theaker A.J."/>
            <person name="Thomas D.W."/>
            <person name="Thorpe A."/>
            <person name="Tracey A."/>
            <person name="Tromans A."/>
            <person name="Tubby B."/>
            <person name="Wall M."/>
            <person name="Wallis J.M."/>
            <person name="West A.P."/>
            <person name="White S.S."/>
            <person name="Whitehead S.L."/>
            <person name="Whittaker H."/>
            <person name="Wild A."/>
            <person name="Willey D.J."/>
            <person name="Wilmer T.E."/>
            <person name="Wood J.M."/>
            <person name="Wray P.W."/>
            <person name="Wyatt J.C."/>
            <person name="Young L."/>
            <person name="Younger R.M."/>
            <person name="Bentley D.R."/>
            <person name="Coulson A."/>
            <person name="Durbin R.M."/>
            <person name="Hubbard T."/>
            <person name="Sulston J.E."/>
            <person name="Dunham I."/>
            <person name="Rogers J."/>
            <person name="Beck S."/>
        </authorList>
    </citation>
    <scope>NUCLEOTIDE SEQUENCE [LARGE SCALE GENOMIC DNA]</scope>
</reference>
<reference key="4">
    <citation type="journal article" date="2004" name="Genome Res.">
        <title>The status, quality, and expansion of the NIH full-length cDNA project: the Mammalian Gene Collection (MGC).</title>
        <authorList>
            <consortium name="The MGC Project Team"/>
        </authorList>
    </citation>
    <scope>NUCLEOTIDE SEQUENCE [LARGE SCALE MRNA]</scope>
    <scope>VARIANTS PRO-23 AND HIS-288</scope>
    <source>
        <tissue>Skin</tissue>
    </source>
</reference>
<reference key="5">
    <citation type="journal article" date="2014" name="Proc. Natl. Acad. Sci. U.S.A.">
        <title>Genetic, anatomic, and clinical determinants of human serum sterol and vitamin D levels.</title>
        <authorList>
            <person name="Stiles A.R."/>
            <person name="Kozlitina J."/>
            <person name="Thompson B.M."/>
            <person name="McDonald J.G."/>
            <person name="King K.S."/>
            <person name="Russell D.W."/>
        </authorList>
    </citation>
    <scope>FUNCTION</scope>
    <scope>CATALYTIC ACTIVITY</scope>
    <scope>POLYMORPHISM</scope>
    <scope>VARIANTS PRO-23; HIS-103; HIS-288; LYS-324 AND GLN-329</scope>
    <scope>PATHWAY</scope>
</reference>
<protein>
    <recommendedName>
        <fullName evidence="7">24-hydroxycholesterol 7-alpha-hydroxylase</fullName>
        <ecNumber evidence="10">1.14.14.26</ecNumber>
    </recommendedName>
    <alternativeName>
        <fullName>Cytochrome P450 39A1</fullName>
        <shortName>hCYP39A1</shortName>
    </alternativeName>
    <alternativeName>
        <fullName>Oxysterol 7-alpha-hydroxylase</fullName>
    </alternativeName>
</protein>
<sequence>MELISPTVIIILGCLALFLLLQRKNLRRPPCIKGWIPWIGVGFEFGKAPLEFIEKARIKYGPIFTVFAMGNRMTFVTEEEGINVFLKSKKVDFELAVQNIVYRTASIPKNVFLALHEKLYIMLKGKMGTVNLHQFTGQLTEELHEQLENLGTHGTMDLNNLVRHLLYPVTVNMLFNKSLFSTNKKKIKEFHQYFQVYDEDFEYGSQLPECLLRNWSKSKKWFLELFEKNIPDIKACKSAKDNSMTLLQATLDIVETETSKENSPNYGLLLLWASLSNAVPVAFWTLAYVLSHPDIHKAIMEGISSVFGKAGKDKIKVSEDDLENLLLIKWCVLETIRLKAPGVITRKVVKPVEILNYIIPSGDLLMLSPFWLHRNPKYFPEPELFKPERWKKANLEKHSFLDCFMAFGSGKFQCPARWFALLEVQMCIILILYKYDCSLLDPLPKQSYLHLVGVPQPEGQCRIEYKQRI</sequence>
<evidence type="ECO:0000250" key="1">
    <source>
        <dbReference type="UniProtKB" id="Q16850"/>
    </source>
</evidence>
<evidence type="ECO:0000250" key="2">
    <source>
        <dbReference type="UniProtKB" id="Q64654"/>
    </source>
</evidence>
<evidence type="ECO:0000255" key="3"/>
<evidence type="ECO:0000269" key="4">
    <source>
    </source>
</evidence>
<evidence type="ECO:0000269" key="5">
    <source>
    </source>
</evidence>
<evidence type="ECO:0000269" key="6">
    <source>
    </source>
</evidence>
<evidence type="ECO:0000303" key="7">
    <source>
    </source>
</evidence>
<evidence type="ECO:0000303" key="8">
    <source>
    </source>
</evidence>
<evidence type="ECO:0000305" key="9"/>
<evidence type="ECO:0000305" key="10">
    <source>
    </source>
</evidence>
<evidence type="ECO:0000312" key="11">
    <source>
        <dbReference type="HGNC" id="HGNC:17449"/>
    </source>
</evidence>